<sequence length="275" mass="31062">MIVTIVGWLVLFVFLPNLMIIGTSFLTRDDASFVKMVFTLDNYTRLLDPLYFEVLLHSLNMALIATLACLVLGYPFAWFLAKLPHKVRPLLLFLLIVPFWTNSLIRIYGLKIFLSTKGYLNEFLLWLGVIDTPIRIMFTPSAVIIGLVYILLPFMVMPLYSSIEKLDKPLLEAARDLGASKLQTFIRIIIPLTMPGIIAGCLLVMLPAMGLFYVSDLMGGAKNLLIGNVIKVQFLNIRDWPFGAATSITLTIVMGLMLLVYWRASRLLNKKVELE</sequence>
<dbReference type="EMBL" id="AE005674">
    <property type="protein sequence ID" value="AAN42745.2"/>
    <property type="molecule type" value="Genomic_DNA"/>
</dbReference>
<dbReference type="EMBL" id="AE014073">
    <property type="protein sequence ID" value="AAP16634.1"/>
    <property type="molecule type" value="Genomic_DNA"/>
</dbReference>
<dbReference type="RefSeq" id="NP_707038.4">
    <property type="nucleotide sequence ID" value="NC_004337.2"/>
</dbReference>
<dbReference type="SMR" id="P0AFK5"/>
<dbReference type="STRING" id="198214.SF1127"/>
<dbReference type="PaxDb" id="198214-SF1127"/>
<dbReference type="GeneID" id="1024098"/>
<dbReference type="KEGG" id="sfl:SF1127"/>
<dbReference type="KEGG" id="sfx:S1207"/>
<dbReference type="PATRIC" id="fig|198214.7.peg.1318"/>
<dbReference type="HOGENOM" id="CLU_016047_18_3_6"/>
<dbReference type="Proteomes" id="UP000001006">
    <property type="component" value="Chromosome"/>
</dbReference>
<dbReference type="Proteomes" id="UP000002673">
    <property type="component" value="Chromosome"/>
</dbReference>
<dbReference type="GO" id="GO:0005886">
    <property type="term" value="C:plasma membrane"/>
    <property type="evidence" value="ECO:0007669"/>
    <property type="project" value="UniProtKB-SubCell"/>
</dbReference>
<dbReference type="GO" id="GO:0055085">
    <property type="term" value="P:transmembrane transport"/>
    <property type="evidence" value="ECO:0007669"/>
    <property type="project" value="InterPro"/>
</dbReference>
<dbReference type="CDD" id="cd06261">
    <property type="entry name" value="TM_PBP2"/>
    <property type="match status" value="1"/>
</dbReference>
<dbReference type="FunFam" id="1.10.3720.10:FF:000029">
    <property type="entry name" value="Spermidine/putrescine ABC transporter permease PotB"/>
    <property type="match status" value="1"/>
</dbReference>
<dbReference type="Gene3D" id="1.10.3720.10">
    <property type="entry name" value="MetI-like"/>
    <property type="match status" value="1"/>
</dbReference>
<dbReference type="InterPro" id="IPR000515">
    <property type="entry name" value="MetI-like"/>
</dbReference>
<dbReference type="InterPro" id="IPR035906">
    <property type="entry name" value="MetI-like_sf"/>
</dbReference>
<dbReference type="NCBIfam" id="NF007044">
    <property type="entry name" value="PRK09497.1"/>
    <property type="match status" value="1"/>
</dbReference>
<dbReference type="PANTHER" id="PTHR42929:SF1">
    <property type="entry name" value="INNER MEMBRANE ABC TRANSPORTER PERMEASE PROTEIN YDCU-RELATED"/>
    <property type="match status" value="1"/>
</dbReference>
<dbReference type="PANTHER" id="PTHR42929">
    <property type="entry name" value="INNER MEMBRANE ABC TRANSPORTER PERMEASE PROTEIN YDCU-RELATED-RELATED"/>
    <property type="match status" value="1"/>
</dbReference>
<dbReference type="Pfam" id="PF00528">
    <property type="entry name" value="BPD_transp_1"/>
    <property type="match status" value="1"/>
</dbReference>
<dbReference type="SUPFAM" id="SSF161098">
    <property type="entry name" value="MetI-like"/>
    <property type="match status" value="1"/>
</dbReference>
<dbReference type="PROSITE" id="PS50928">
    <property type="entry name" value="ABC_TM1"/>
    <property type="match status" value="1"/>
</dbReference>
<name>POTB_SHIFL</name>
<reference key="1">
    <citation type="journal article" date="2002" name="Nucleic Acids Res.">
        <title>Genome sequence of Shigella flexneri 2a: insights into pathogenicity through comparison with genomes of Escherichia coli K12 and O157.</title>
        <authorList>
            <person name="Jin Q."/>
            <person name="Yuan Z."/>
            <person name="Xu J."/>
            <person name="Wang Y."/>
            <person name="Shen Y."/>
            <person name="Lu W."/>
            <person name="Wang J."/>
            <person name="Liu H."/>
            <person name="Yang J."/>
            <person name="Yang F."/>
            <person name="Zhang X."/>
            <person name="Zhang J."/>
            <person name="Yang G."/>
            <person name="Wu H."/>
            <person name="Qu D."/>
            <person name="Dong J."/>
            <person name="Sun L."/>
            <person name="Xue Y."/>
            <person name="Zhao A."/>
            <person name="Gao Y."/>
            <person name="Zhu J."/>
            <person name="Kan B."/>
            <person name="Ding K."/>
            <person name="Chen S."/>
            <person name="Cheng H."/>
            <person name="Yao Z."/>
            <person name="He B."/>
            <person name="Chen R."/>
            <person name="Ma D."/>
            <person name="Qiang B."/>
            <person name="Wen Y."/>
            <person name="Hou Y."/>
            <person name="Yu J."/>
        </authorList>
    </citation>
    <scope>NUCLEOTIDE SEQUENCE [LARGE SCALE GENOMIC DNA]</scope>
    <source>
        <strain>301 / Serotype 2a</strain>
    </source>
</reference>
<reference key="2">
    <citation type="journal article" date="2003" name="Infect. Immun.">
        <title>Complete genome sequence and comparative genomics of Shigella flexneri serotype 2a strain 2457T.</title>
        <authorList>
            <person name="Wei J."/>
            <person name="Goldberg M.B."/>
            <person name="Burland V."/>
            <person name="Venkatesan M.M."/>
            <person name="Deng W."/>
            <person name="Fournier G."/>
            <person name="Mayhew G.F."/>
            <person name="Plunkett G. III"/>
            <person name="Rose D.J."/>
            <person name="Darling A."/>
            <person name="Mau B."/>
            <person name="Perna N.T."/>
            <person name="Payne S.M."/>
            <person name="Runyen-Janecky L.J."/>
            <person name="Zhou S."/>
            <person name="Schwartz D.C."/>
            <person name="Blattner F.R."/>
        </authorList>
    </citation>
    <scope>NUCLEOTIDE SEQUENCE [LARGE SCALE GENOMIC DNA]</scope>
    <source>
        <strain>ATCC 700930 / 2457T / Serotype 2a</strain>
    </source>
</reference>
<keyword id="KW-0997">Cell inner membrane</keyword>
<keyword id="KW-1003">Cell membrane</keyword>
<keyword id="KW-0472">Membrane</keyword>
<keyword id="KW-1185">Reference proteome</keyword>
<keyword id="KW-0812">Transmembrane</keyword>
<keyword id="KW-1133">Transmembrane helix</keyword>
<keyword id="KW-0813">Transport</keyword>
<feature type="chain" id="PRO_0000060177" description="Spermidine/putrescine transport system permease protein PotB">
    <location>
        <begin position="1"/>
        <end position="275"/>
    </location>
</feature>
<feature type="transmembrane region" description="Helical" evidence="3">
    <location>
        <begin position="1"/>
        <end position="21"/>
    </location>
</feature>
<feature type="topological domain" description="Periplasmic" evidence="2">
    <location>
        <begin position="22"/>
        <end position="60"/>
    </location>
</feature>
<feature type="transmembrane region" description="Helical" evidence="3">
    <location>
        <begin position="61"/>
        <end position="81"/>
    </location>
</feature>
<feature type="topological domain" description="Cytoplasmic" evidence="2">
    <location>
        <begin position="82"/>
        <end position="89"/>
    </location>
</feature>
<feature type="transmembrane region" description="Helical" evidence="3">
    <location>
        <begin position="90"/>
        <end position="110"/>
    </location>
</feature>
<feature type="topological domain" description="Periplasmic" evidence="2">
    <location>
        <begin position="111"/>
        <end position="135"/>
    </location>
</feature>
<feature type="transmembrane region" description="Helical" evidence="3">
    <location>
        <begin position="136"/>
        <end position="156"/>
    </location>
</feature>
<feature type="topological domain" description="Cytoplasmic" evidence="2">
    <location>
        <begin position="157"/>
        <end position="187"/>
    </location>
</feature>
<feature type="transmembrane region" description="Helical" evidence="3">
    <location>
        <begin position="188"/>
        <end position="208"/>
    </location>
</feature>
<feature type="topological domain" description="Periplasmic" evidence="2">
    <location>
        <begin position="209"/>
        <end position="241"/>
    </location>
</feature>
<feature type="transmembrane region" description="Helical" evidence="3">
    <location>
        <begin position="242"/>
        <end position="262"/>
    </location>
</feature>
<feature type="topological domain" description="Cytoplasmic" evidence="2">
    <location>
        <begin position="263"/>
        <end position="275"/>
    </location>
</feature>
<feature type="domain" description="ABC transmembrane type-1" evidence="3">
    <location>
        <begin position="55"/>
        <end position="261"/>
    </location>
</feature>
<evidence type="ECO:0000250" key="1"/>
<evidence type="ECO:0000255" key="2"/>
<evidence type="ECO:0000255" key="3">
    <source>
        <dbReference type="PROSITE-ProRule" id="PRU00441"/>
    </source>
</evidence>
<evidence type="ECO:0000305" key="4"/>
<protein>
    <recommendedName>
        <fullName>Spermidine/putrescine transport system permease protein PotB</fullName>
    </recommendedName>
</protein>
<organism>
    <name type="scientific">Shigella flexneri</name>
    <dbReference type="NCBI Taxonomy" id="623"/>
    <lineage>
        <taxon>Bacteria</taxon>
        <taxon>Pseudomonadati</taxon>
        <taxon>Pseudomonadota</taxon>
        <taxon>Gammaproteobacteria</taxon>
        <taxon>Enterobacterales</taxon>
        <taxon>Enterobacteriaceae</taxon>
        <taxon>Shigella</taxon>
    </lineage>
</organism>
<comment type="function">
    <text evidence="1">Required for the activity of the bacterial periplasmic transport system of putrescine and spermidine.</text>
</comment>
<comment type="subcellular location">
    <subcellularLocation>
        <location evidence="1">Cell inner membrane</location>
        <topology evidence="3">Multi-pass membrane protein</topology>
    </subcellularLocation>
</comment>
<comment type="similarity">
    <text evidence="4">Belongs to the binding-protein-dependent transport system permease family. CysTW subfamily.</text>
</comment>
<accession>P0AFK5</accession>
<accession>P23860</accession>
<gene>
    <name type="primary">potB</name>
    <name type="ordered locus">SF1127</name>
    <name type="ordered locus">S1207</name>
</gene>
<proteinExistence type="inferred from homology"/>